<reference key="1">
    <citation type="journal article" date="1998" name="Curr. Microbiol.">
        <title>Sequence analysis of a 34.7-kb DNA segment from the genome of Buchnera aphidicola (endosymbiont of aphids) containing groEL, dnaA, the atp operon, gidA, and rho.</title>
        <authorList>
            <person name="Clark M.A."/>
            <person name="Baumann L."/>
            <person name="Baumann P."/>
        </authorList>
    </citation>
    <scope>NUCLEOTIDE SEQUENCE [GENOMIC DNA]</scope>
</reference>
<reference key="2">
    <citation type="journal article" date="2002" name="Science">
        <title>50 million years of genomic stasis in endosymbiotic bacteria.</title>
        <authorList>
            <person name="Tamas I."/>
            <person name="Klasson L."/>
            <person name="Canbaeck B."/>
            <person name="Naeslund A.K."/>
            <person name="Eriksson A.-S."/>
            <person name="Wernegreen J.J."/>
            <person name="Sandstroem J.P."/>
            <person name="Moran N.A."/>
            <person name="Andersson S.G.E."/>
        </authorList>
    </citation>
    <scope>NUCLEOTIDE SEQUENCE [LARGE SCALE GENOMIC DNA]</scope>
    <source>
        <strain>Sg</strain>
    </source>
</reference>
<keyword id="KW-0963">Cytoplasm</keyword>
<keyword id="KW-0274">FAD</keyword>
<keyword id="KW-0285">Flavoprotein</keyword>
<keyword id="KW-0520">NAD</keyword>
<keyword id="KW-0819">tRNA processing</keyword>
<proteinExistence type="inferred from homology"/>
<dbReference type="EMBL" id="AF008210">
    <property type="protein sequence ID" value="AAC38117.1"/>
    <property type="molecule type" value="Genomic_DNA"/>
</dbReference>
<dbReference type="EMBL" id="AE013218">
    <property type="protein sequence ID" value="AAM67573.1"/>
    <property type="molecule type" value="Genomic_DNA"/>
</dbReference>
<dbReference type="RefSeq" id="WP_011053539.1">
    <property type="nucleotide sequence ID" value="NC_004061.1"/>
</dbReference>
<dbReference type="SMR" id="O51879"/>
<dbReference type="STRING" id="198804.BUsg_001"/>
<dbReference type="GeneID" id="93003463"/>
<dbReference type="KEGG" id="bas:BUsg_001"/>
<dbReference type="eggNOG" id="COG0445">
    <property type="taxonomic scope" value="Bacteria"/>
</dbReference>
<dbReference type="HOGENOM" id="CLU_007831_2_2_6"/>
<dbReference type="Proteomes" id="UP000000416">
    <property type="component" value="Chromosome"/>
</dbReference>
<dbReference type="GO" id="GO:0005829">
    <property type="term" value="C:cytosol"/>
    <property type="evidence" value="ECO:0007669"/>
    <property type="project" value="TreeGrafter"/>
</dbReference>
<dbReference type="GO" id="GO:0050660">
    <property type="term" value="F:flavin adenine dinucleotide binding"/>
    <property type="evidence" value="ECO:0007669"/>
    <property type="project" value="UniProtKB-UniRule"/>
</dbReference>
<dbReference type="GO" id="GO:0030488">
    <property type="term" value="P:tRNA methylation"/>
    <property type="evidence" value="ECO:0007669"/>
    <property type="project" value="TreeGrafter"/>
</dbReference>
<dbReference type="GO" id="GO:0002098">
    <property type="term" value="P:tRNA wobble uridine modification"/>
    <property type="evidence" value="ECO:0007669"/>
    <property type="project" value="InterPro"/>
</dbReference>
<dbReference type="FunFam" id="1.10.10.1800:FF:000001">
    <property type="entry name" value="tRNA uridine 5-carboxymethylaminomethyl modification enzyme MnmG"/>
    <property type="match status" value="1"/>
</dbReference>
<dbReference type="FunFam" id="1.10.150.570:FF:000001">
    <property type="entry name" value="tRNA uridine 5-carboxymethylaminomethyl modification enzyme MnmG"/>
    <property type="match status" value="1"/>
</dbReference>
<dbReference type="FunFam" id="3.50.50.60:FF:000002">
    <property type="entry name" value="tRNA uridine 5-carboxymethylaminomethyl modification enzyme MnmG"/>
    <property type="match status" value="1"/>
</dbReference>
<dbReference type="FunFam" id="3.50.50.60:FF:000010">
    <property type="entry name" value="tRNA uridine 5-carboxymethylaminomethyl modification enzyme MnmG"/>
    <property type="match status" value="1"/>
</dbReference>
<dbReference type="Gene3D" id="3.50.50.60">
    <property type="entry name" value="FAD/NAD(P)-binding domain"/>
    <property type="match status" value="2"/>
</dbReference>
<dbReference type="Gene3D" id="1.10.150.570">
    <property type="entry name" value="GidA associated domain, C-terminal subdomain"/>
    <property type="match status" value="1"/>
</dbReference>
<dbReference type="Gene3D" id="1.10.10.1800">
    <property type="entry name" value="tRNA uridine 5-carboxymethylaminomethyl modification enzyme MnmG/GidA"/>
    <property type="match status" value="1"/>
</dbReference>
<dbReference type="HAMAP" id="MF_00129">
    <property type="entry name" value="MnmG_GidA"/>
    <property type="match status" value="1"/>
</dbReference>
<dbReference type="InterPro" id="IPR036188">
    <property type="entry name" value="FAD/NAD-bd_sf"/>
</dbReference>
<dbReference type="InterPro" id="IPR049312">
    <property type="entry name" value="GIDA_C_N"/>
</dbReference>
<dbReference type="InterPro" id="IPR004416">
    <property type="entry name" value="MnmG"/>
</dbReference>
<dbReference type="InterPro" id="IPR002218">
    <property type="entry name" value="MnmG-rel"/>
</dbReference>
<dbReference type="InterPro" id="IPR020595">
    <property type="entry name" value="MnmG-rel_CS"/>
</dbReference>
<dbReference type="InterPro" id="IPR026904">
    <property type="entry name" value="MnmG_C"/>
</dbReference>
<dbReference type="InterPro" id="IPR047001">
    <property type="entry name" value="MnmG_C_subdom"/>
</dbReference>
<dbReference type="InterPro" id="IPR044920">
    <property type="entry name" value="MnmG_C_subdom_sf"/>
</dbReference>
<dbReference type="InterPro" id="IPR040131">
    <property type="entry name" value="MnmG_N"/>
</dbReference>
<dbReference type="NCBIfam" id="TIGR00136">
    <property type="entry name" value="mnmG_gidA"/>
    <property type="match status" value="1"/>
</dbReference>
<dbReference type="PANTHER" id="PTHR11806">
    <property type="entry name" value="GLUCOSE INHIBITED DIVISION PROTEIN A"/>
    <property type="match status" value="1"/>
</dbReference>
<dbReference type="PANTHER" id="PTHR11806:SF0">
    <property type="entry name" value="PROTEIN MTO1 HOMOLOG, MITOCHONDRIAL"/>
    <property type="match status" value="1"/>
</dbReference>
<dbReference type="Pfam" id="PF01134">
    <property type="entry name" value="GIDA"/>
    <property type="match status" value="1"/>
</dbReference>
<dbReference type="Pfam" id="PF21680">
    <property type="entry name" value="GIDA_C_1st"/>
    <property type="match status" value="1"/>
</dbReference>
<dbReference type="Pfam" id="PF13932">
    <property type="entry name" value="SAM_GIDA_C"/>
    <property type="match status" value="1"/>
</dbReference>
<dbReference type="SMART" id="SM01228">
    <property type="entry name" value="GIDA_assoc_3"/>
    <property type="match status" value="1"/>
</dbReference>
<dbReference type="SUPFAM" id="SSF51905">
    <property type="entry name" value="FAD/NAD(P)-binding domain"/>
    <property type="match status" value="1"/>
</dbReference>
<dbReference type="PROSITE" id="PS01280">
    <property type="entry name" value="GIDA_1"/>
    <property type="match status" value="1"/>
</dbReference>
<dbReference type="PROSITE" id="PS01281">
    <property type="entry name" value="GIDA_2"/>
    <property type="match status" value="1"/>
</dbReference>
<sequence>MSKSYLKNFDVIVIGGGHAGTEAAAASARVGCKTLLLTQKITDIGVLSCNPAIGGIGKSHLVKEIDALGGLMARAIDYSGIQFRVLNSKKGPAVRSTRAQADRILYCQNIKKLLKKELNLLILETEVKDLIVKNYQVIGVLTQSNMSFYSRSVVLSTGTFLGGKIHIGLESYSAGRKGEKASIDLALRLRDLPFRVDRLKTGTPPRIDINTINFENLFVQHGDVPTPVFSFMGDISNHPLQIPCFLTHTNEKTHEIIRKNLHKSPLYTGIIKGVGPRYCPSIEDKIVRFPDRKSHQIFLEPEGLTSIEIYPNGISTSLPLDVQKEIVSSVKGLEKSKIITPGYAVEYDFFDPKDLNLTLESKWIKGLFLAGQINGTTGYEEAASQGLLAGLNAALSAKDCKQWFPRRDQAYLGVLIDDLTTQGANEPYRMFTSRSEYRLTLREDNADLRLTEIAYKLGLVDNPRWIRYNEKVLNISNEKNRLKKIKIYPKSSDSTILNQLFNIVLTKEINILNLLKRPEITYENLKYLKNFKVGISDLEAAGQIENEIKYEGYIKRQLEEINRHLKNENTPLLPTYDYNKIKGLSHEAVLKLNDYKPVSVGQASRISGITPATISILLIHLKKEYYKNHLS</sequence>
<gene>
    <name evidence="1" type="primary">mnmG</name>
    <name evidence="1" type="synonym">gidA</name>
    <name type="ordered locus">BUsg_001</name>
</gene>
<feature type="chain" id="PRO_0000117074" description="tRNA uridine 5-carboxymethylaminomethyl modification enzyme MnmG">
    <location>
        <begin position="1"/>
        <end position="631"/>
    </location>
</feature>
<feature type="binding site" evidence="1">
    <location>
        <begin position="15"/>
        <end position="20"/>
    </location>
    <ligand>
        <name>FAD</name>
        <dbReference type="ChEBI" id="CHEBI:57692"/>
    </ligand>
</feature>
<feature type="binding site" evidence="1">
    <location>
        <position position="127"/>
    </location>
    <ligand>
        <name>FAD</name>
        <dbReference type="ChEBI" id="CHEBI:57692"/>
    </ligand>
</feature>
<feature type="binding site" evidence="1">
    <location>
        <position position="182"/>
    </location>
    <ligand>
        <name>FAD</name>
        <dbReference type="ChEBI" id="CHEBI:57692"/>
    </ligand>
</feature>
<feature type="binding site" evidence="1">
    <location>
        <begin position="275"/>
        <end position="289"/>
    </location>
    <ligand>
        <name>NAD(+)</name>
        <dbReference type="ChEBI" id="CHEBI:57540"/>
    </ligand>
</feature>
<feature type="binding site" evidence="1">
    <location>
        <position position="372"/>
    </location>
    <ligand>
        <name>FAD</name>
        <dbReference type="ChEBI" id="CHEBI:57692"/>
    </ligand>
</feature>
<name>MNMG_BUCAP</name>
<accession>O51879</accession>
<organism>
    <name type="scientific">Buchnera aphidicola subsp. Schizaphis graminum (strain Sg)</name>
    <dbReference type="NCBI Taxonomy" id="198804"/>
    <lineage>
        <taxon>Bacteria</taxon>
        <taxon>Pseudomonadati</taxon>
        <taxon>Pseudomonadota</taxon>
        <taxon>Gammaproteobacteria</taxon>
        <taxon>Enterobacterales</taxon>
        <taxon>Erwiniaceae</taxon>
        <taxon>Buchnera</taxon>
    </lineage>
</organism>
<protein>
    <recommendedName>
        <fullName evidence="1">tRNA uridine 5-carboxymethylaminomethyl modification enzyme MnmG</fullName>
    </recommendedName>
    <alternativeName>
        <fullName evidence="1">Glucose-inhibited division protein A</fullName>
    </alternativeName>
</protein>
<evidence type="ECO:0000255" key="1">
    <source>
        <dbReference type="HAMAP-Rule" id="MF_00129"/>
    </source>
</evidence>
<comment type="function">
    <text evidence="1">NAD-binding protein involved in the addition of a carboxymethylaminomethyl (cmnm) group at the wobble position (U34) of certain tRNAs, forming tRNA-cmnm(5)s(2)U34.</text>
</comment>
<comment type="cofactor">
    <cofactor evidence="1">
        <name>FAD</name>
        <dbReference type="ChEBI" id="CHEBI:57692"/>
    </cofactor>
</comment>
<comment type="subunit">
    <text evidence="1">Homodimer. Heterotetramer of two MnmE and two MnmG subunits.</text>
</comment>
<comment type="subcellular location">
    <subcellularLocation>
        <location evidence="1">Cytoplasm</location>
    </subcellularLocation>
</comment>
<comment type="similarity">
    <text evidence="1">Belongs to the MnmG family.</text>
</comment>